<feature type="chain" id="PRO_1000014391" description="Glycogen synthase">
    <location>
        <begin position="1"/>
        <end position="460"/>
    </location>
</feature>
<feature type="binding site" evidence="1">
    <location>
        <position position="15"/>
    </location>
    <ligand>
        <name>ADP-alpha-D-glucose</name>
        <dbReference type="ChEBI" id="CHEBI:57498"/>
    </ligand>
</feature>
<reference key="1">
    <citation type="journal article" date="2015" name="Proc. Natl. Acad. Sci. U.S.A.">
        <title>Trichodesmium genome maintains abundant, widespread noncoding DNA in situ, despite oligotrophic lifestyle.</title>
        <authorList>
            <person name="Walworth N."/>
            <person name="Pfreundt U."/>
            <person name="Nelson W.C."/>
            <person name="Mincer T."/>
            <person name="Heidelberg J.F."/>
            <person name="Fu F."/>
            <person name="Waterbury J.B."/>
            <person name="Glavina del Rio T."/>
            <person name="Goodwin L."/>
            <person name="Kyrpides N.C."/>
            <person name="Land M.L."/>
            <person name="Woyke T."/>
            <person name="Hutchins D.A."/>
            <person name="Hess W.R."/>
            <person name="Webb E.A."/>
        </authorList>
    </citation>
    <scope>NUCLEOTIDE SEQUENCE [LARGE SCALE GENOMIC DNA]</scope>
    <source>
        <strain>IMS101</strain>
    </source>
</reference>
<comment type="function">
    <text evidence="1">Synthesizes alpha-1,4-glucan chains using ADP-glucose.</text>
</comment>
<comment type="catalytic activity">
    <reaction evidence="1">
        <text>[(1-&gt;4)-alpha-D-glucosyl](n) + ADP-alpha-D-glucose = [(1-&gt;4)-alpha-D-glucosyl](n+1) + ADP + H(+)</text>
        <dbReference type="Rhea" id="RHEA:18189"/>
        <dbReference type="Rhea" id="RHEA-COMP:9584"/>
        <dbReference type="Rhea" id="RHEA-COMP:9587"/>
        <dbReference type="ChEBI" id="CHEBI:15378"/>
        <dbReference type="ChEBI" id="CHEBI:15444"/>
        <dbReference type="ChEBI" id="CHEBI:57498"/>
        <dbReference type="ChEBI" id="CHEBI:456216"/>
        <dbReference type="EC" id="2.4.1.21"/>
    </reaction>
</comment>
<comment type="pathway">
    <text evidence="1">Glycan biosynthesis; glycogen biosynthesis.</text>
</comment>
<comment type="similarity">
    <text evidence="1">Belongs to the glycosyltransferase 1 family. Bacterial/plant glycogen synthase subfamily.</text>
</comment>
<gene>
    <name evidence="1" type="primary">glgA</name>
    <name type="ordered locus">Tery_2147</name>
</gene>
<sequence length="460" mass="53246">MRILFVSAEATPLAKVGGMADVVGALPKVLRKMGHDVRIFMPYYGFLGDKMEVPEEPIWEGTAMYQNFKIYETVLPKSDVPLYLFGHPAFWPRHIYYGDDEDWRFTLFANGAAEFCWNGWKPEIVHCNDWHTGMIPVWMHETPDIKTVFTIHNLAYQGPWRWYLERITWCPWYMEGHNTMAAAVQFADRVTTVSPTYASQIQTPAYGENLDGLMSFITGKLHGILNGIDMNFYNPANDRYIPQTYDVNTLEKRVDNKIALQEEVGFEVNKNSFLMGMVSRLVEQKGLDLMLQVLDRFMAYTDTQFILLGTGDRFYETQMWQIASRYPGRMSVQLLHNDALSRRIYAGTDAFLMPSRFEPCGISQLLAMRYGSIPIVRRTGGLVDTVSFYDPINNVGTGYSFDRYEPLDLLTAMVRAYEGFRFKDQWQELQKRGMRENFSWDKSAQGYIKMYKSMLGLPEE</sequence>
<proteinExistence type="inferred from homology"/>
<protein>
    <recommendedName>
        <fullName evidence="1">Glycogen synthase</fullName>
        <ecNumber evidence="1">2.4.1.21</ecNumber>
    </recommendedName>
    <alternativeName>
        <fullName evidence="1">Starch [bacterial glycogen] synthase</fullName>
    </alternativeName>
</protein>
<accession>Q113E3</accession>
<evidence type="ECO:0000255" key="1">
    <source>
        <dbReference type="HAMAP-Rule" id="MF_00484"/>
    </source>
</evidence>
<keyword id="KW-0320">Glycogen biosynthesis</keyword>
<keyword id="KW-0328">Glycosyltransferase</keyword>
<keyword id="KW-0808">Transferase</keyword>
<dbReference type="EC" id="2.4.1.21" evidence="1"/>
<dbReference type="EMBL" id="CP000393">
    <property type="protein sequence ID" value="ABG51381.1"/>
    <property type="molecule type" value="Genomic_DNA"/>
</dbReference>
<dbReference type="RefSeq" id="WP_011611751.1">
    <property type="nucleotide sequence ID" value="NC_008312.1"/>
</dbReference>
<dbReference type="SMR" id="Q113E3"/>
<dbReference type="STRING" id="203124.Tery_2147"/>
<dbReference type="CAZy" id="GT5">
    <property type="family name" value="Glycosyltransferase Family 5"/>
</dbReference>
<dbReference type="KEGG" id="ter:Tery_2147"/>
<dbReference type="eggNOG" id="COG0297">
    <property type="taxonomic scope" value="Bacteria"/>
</dbReference>
<dbReference type="HOGENOM" id="CLU_009583_18_2_3"/>
<dbReference type="OrthoDB" id="9808590at2"/>
<dbReference type="UniPathway" id="UPA00164"/>
<dbReference type="GO" id="GO:0009011">
    <property type="term" value="F:alpha-1,4-glucan glucosyltransferase (ADP-glucose donor) activity"/>
    <property type="evidence" value="ECO:0007669"/>
    <property type="project" value="UniProtKB-UniRule"/>
</dbReference>
<dbReference type="GO" id="GO:0004373">
    <property type="term" value="F:alpha-1,4-glucan glucosyltransferase (UDP-glucose donor) activity"/>
    <property type="evidence" value="ECO:0007669"/>
    <property type="project" value="InterPro"/>
</dbReference>
<dbReference type="GO" id="GO:0005978">
    <property type="term" value="P:glycogen biosynthetic process"/>
    <property type="evidence" value="ECO:0007669"/>
    <property type="project" value="UniProtKB-UniRule"/>
</dbReference>
<dbReference type="CDD" id="cd03791">
    <property type="entry name" value="GT5_Glycogen_synthase_DULL1-like"/>
    <property type="match status" value="1"/>
</dbReference>
<dbReference type="Gene3D" id="3.40.50.2000">
    <property type="entry name" value="Glycogen Phosphorylase B"/>
    <property type="match status" value="2"/>
</dbReference>
<dbReference type="HAMAP" id="MF_00484">
    <property type="entry name" value="Glycogen_synth"/>
    <property type="match status" value="1"/>
</dbReference>
<dbReference type="InterPro" id="IPR001296">
    <property type="entry name" value="Glyco_trans_1"/>
</dbReference>
<dbReference type="InterPro" id="IPR011835">
    <property type="entry name" value="GS/SS"/>
</dbReference>
<dbReference type="InterPro" id="IPR013534">
    <property type="entry name" value="Starch_synth_cat_dom"/>
</dbReference>
<dbReference type="NCBIfam" id="TIGR02095">
    <property type="entry name" value="glgA"/>
    <property type="match status" value="1"/>
</dbReference>
<dbReference type="NCBIfam" id="NF001900">
    <property type="entry name" value="PRK00654.1-3"/>
    <property type="match status" value="1"/>
</dbReference>
<dbReference type="PANTHER" id="PTHR45825:SF11">
    <property type="entry name" value="ALPHA AMYLASE DOMAIN-CONTAINING PROTEIN"/>
    <property type="match status" value="1"/>
</dbReference>
<dbReference type="PANTHER" id="PTHR45825">
    <property type="entry name" value="GRANULE-BOUND STARCH SYNTHASE 1, CHLOROPLASTIC/AMYLOPLASTIC"/>
    <property type="match status" value="1"/>
</dbReference>
<dbReference type="Pfam" id="PF08323">
    <property type="entry name" value="Glyco_transf_5"/>
    <property type="match status" value="1"/>
</dbReference>
<dbReference type="Pfam" id="PF00534">
    <property type="entry name" value="Glycos_transf_1"/>
    <property type="match status" value="1"/>
</dbReference>
<dbReference type="SUPFAM" id="SSF53756">
    <property type="entry name" value="UDP-Glycosyltransferase/glycogen phosphorylase"/>
    <property type="match status" value="1"/>
</dbReference>
<organism>
    <name type="scientific">Trichodesmium erythraeum (strain IMS101)</name>
    <dbReference type="NCBI Taxonomy" id="203124"/>
    <lineage>
        <taxon>Bacteria</taxon>
        <taxon>Bacillati</taxon>
        <taxon>Cyanobacteriota</taxon>
        <taxon>Cyanophyceae</taxon>
        <taxon>Oscillatoriophycideae</taxon>
        <taxon>Oscillatoriales</taxon>
        <taxon>Microcoleaceae</taxon>
        <taxon>Trichodesmium</taxon>
    </lineage>
</organism>
<name>GLGA_TRIEI</name>